<proteinExistence type="evidence at protein level"/>
<organism>
    <name type="scientific">Arabidopsis thaliana</name>
    <name type="common">Mouse-ear cress</name>
    <dbReference type="NCBI Taxonomy" id="3702"/>
    <lineage>
        <taxon>Eukaryota</taxon>
        <taxon>Viridiplantae</taxon>
        <taxon>Streptophyta</taxon>
        <taxon>Embryophyta</taxon>
        <taxon>Tracheophyta</taxon>
        <taxon>Spermatophyta</taxon>
        <taxon>Magnoliopsida</taxon>
        <taxon>eudicotyledons</taxon>
        <taxon>Gunneridae</taxon>
        <taxon>Pentapetalae</taxon>
        <taxon>rosids</taxon>
        <taxon>malvids</taxon>
        <taxon>Brassicales</taxon>
        <taxon>Brassicaceae</taxon>
        <taxon>Camelineae</taxon>
        <taxon>Arabidopsis</taxon>
    </lineage>
</organism>
<gene>
    <name evidence="6" type="primary">MDAR2</name>
    <name evidence="8" type="ordered locus">At5g03630</name>
    <name evidence="9" type="ORF">F17C15.50</name>
</gene>
<feature type="chain" id="PRO_0000209139" description="Monodehydroascorbate reductase 2">
    <location>
        <begin position="1"/>
        <end position="435"/>
    </location>
</feature>
<feature type="binding site" evidence="1">
    <location>
        <begin position="14"/>
        <end position="17"/>
    </location>
    <ligand>
        <name>FAD</name>
        <dbReference type="ChEBI" id="CHEBI:57692"/>
    </ligand>
</feature>
<feature type="binding site" evidence="1">
    <location>
        <position position="41"/>
    </location>
    <ligand>
        <name>FAD</name>
        <dbReference type="ChEBI" id="CHEBI:57692"/>
    </ligand>
</feature>
<feature type="binding site" evidence="1">
    <location>
        <position position="48"/>
    </location>
    <ligand>
        <name>FAD</name>
        <dbReference type="ChEBI" id="CHEBI:57692"/>
    </ligand>
</feature>
<feature type="binding site" evidence="1">
    <location>
        <position position="53"/>
    </location>
    <ligand>
        <name>FAD</name>
        <dbReference type="ChEBI" id="CHEBI:57692"/>
    </ligand>
</feature>
<feature type="binding site" evidence="1">
    <location>
        <position position="96"/>
    </location>
    <ligand>
        <name>FAD</name>
        <dbReference type="ChEBI" id="CHEBI:57692"/>
    </ligand>
</feature>
<feature type="binding site" evidence="1">
    <location>
        <begin position="147"/>
        <end position="148"/>
    </location>
    <ligand>
        <name>FAD</name>
        <dbReference type="ChEBI" id="CHEBI:57692"/>
    </ligand>
</feature>
<feature type="binding site" evidence="1">
    <location>
        <begin position="172"/>
        <end position="178"/>
    </location>
    <ligand>
        <name>NAD(+)</name>
        <dbReference type="ChEBI" id="CHEBI:57540"/>
    </ligand>
</feature>
<feature type="binding site" evidence="1">
    <location>
        <begin position="174"/>
        <end position="178"/>
    </location>
    <ligand>
        <name>NADP(+)</name>
        <dbReference type="ChEBI" id="CHEBI:58349"/>
    </ligand>
</feature>
<feature type="binding site" evidence="1">
    <location>
        <position position="196"/>
    </location>
    <ligand>
        <name>NAD(+)</name>
        <dbReference type="ChEBI" id="CHEBI:57540"/>
    </ligand>
</feature>
<feature type="binding site" evidence="1">
    <location>
        <position position="202"/>
    </location>
    <ligand>
        <name>NAD(+)</name>
        <dbReference type="ChEBI" id="CHEBI:57540"/>
    </ligand>
</feature>
<feature type="binding site" evidence="1">
    <location>
        <position position="202"/>
    </location>
    <ligand>
        <name>NADP(+)</name>
        <dbReference type="ChEBI" id="CHEBI:58349"/>
    </ligand>
</feature>
<feature type="binding site" evidence="1">
    <location>
        <position position="261"/>
    </location>
    <ligand>
        <name>NAD(+)</name>
        <dbReference type="ChEBI" id="CHEBI:57540"/>
    </ligand>
</feature>
<feature type="binding site" evidence="1">
    <location>
        <position position="261"/>
    </location>
    <ligand>
        <name>NADP(+)</name>
        <dbReference type="ChEBI" id="CHEBI:58349"/>
    </ligand>
</feature>
<feature type="binding site" evidence="1">
    <location>
        <position position="298"/>
    </location>
    <ligand>
        <name>FAD</name>
        <dbReference type="ChEBI" id="CHEBI:57692"/>
    </ligand>
</feature>
<feature type="binding site" evidence="1">
    <location>
        <begin position="314"/>
        <end position="315"/>
    </location>
    <ligand>
        <name>NAD(+)</name>
        <dbReference type="ChEBI" id="CHEBI:57540"/>
    </ligand>
</feature>
<feature type="binding site" evidence="1">
    <location>
        <begin position="314"/>
        <end position="315"/>
    </location>
    <ligand>
        <name>NADP(+)</name>
        <dbReference type="ChEBI" id="CHEBI:58349"/>
    </ligand>
</feature>
<feature type="binding site" evidence="1">
    <location>
        <position position="316"/>
    </location>
    <ligand>
        <name>FAD</name>
        <dbReference type="ChEBI" id="CHEBI:57692"/>
    </ligand>
</feature>
<feature type="binding site" evidence="1">
    <location>
        <position position="320"/>
    </location>
    <ligand>
        <name>L-ascorbate</name>
        <dbReference type="ChEBI" id="CHEBI:38290"/>
    </ligand>
</feature>
<feature type="binding site" evidence="1">
    <location>
        <position position="349"/>
    </location>
    <ligand>
        <name>FAD</name>
        <dbReference type="ChEBI" id="CHEBI:57692"/>
    </ligand>
</feature>
<feature type="binding site" evidence="1">
    <location>
        <position position="349"/>
    </location>
    <ligand>
        <name>NAD(+)</name>
        <dbReference type="ChEBI" id="CHEBI:57540"/>
    </ligand>
</feature>
<feature type="binding site" evidence="1">
    <location>
        <position position="349"/>
    </location>
    <ligand>
        <name>NADP(+)</name>
        <dbReference type="ChEBI" id="CHEBI:58349"/>
    </ligand>
</feature>
<feature type="binding site" evidence="1">
    <location>
        <position position="351"/>
    </location>
    <ligand>
        <name>L-ascorbate</name>
        <dbReference type="ChEBI" id="CHEBI:38290"/>
    </ligand>
</feature>
<feature type="modified residue" description="Phosphoserine" evidence="2">
    <location>
        <position position="417"/>
    </location>
</feature>
<feature type="sequence conflict" description="In Ref. 4; AAM64868." evidence="7" ref="4">
    <original>R</original>
    <variation>G</variation>
    <location>
        <position position="390"/>
    </location>
</feature>
<protein>
    <recommendedName>
        <fullName evidence="6">Monodehydroascorbate reductase 2</fullName>
        <shortName evidence="6">AtMDAR2</shortName>
        <ecNumber evidence="7">1.6.5.4</ecNumber>
    </recommendedName>
</protein>
<keyword id="KW-0963">Cytoplasm</keyword>
<keyword id="KW-0274">FAD</keyword>
<keyword id="KW-0285">Flavoprotein</keyword>
<keyword id="KW-0520">NAD</keyword>
<keyword id="KW-0521">NADP</keyword>
<keyword id="KW-0560">Oxidoreductase</keyword>
<keyword id="KW-0597">Phosphoprotein</keyword>
<keyword id="KW-0676">Redox-active center</keyword>
<keyword id="KW-1185">Reference proteome</keyword>
<accession>Q93WJ8</accession>
<accession>Q0WUJ1</accession>
<accession>Q8LBB1</accession>
<accession>Q9LZS5</accession>
<comment type="function">
    <text evidence="4">Catalyzes the conversion of monodehydroascorbate to ascorbate, oxidizing NADH in the process.</text>
</comment>
<comment type="catalytic activity">
    <reaction evidence="7">
        <text>2 monodehydro-L-ascorbate radical + NADH + H(+) = 2 L-ascorbate + NAD(+)</text>
        <dbReference type="Rhea" id="RHEA:14581"/>
        <dbReference type="ChEBI" id="CHEBI:15378"/>
        <dbReference type="ChEBI" id="CHEBI:38290"/>
        <dbReference type="ChEBI" id="CHEBI:57540"/>
        <dbReference type="ChEBI" id="CHEBI:57945"/>
        <dbReference type="ChEBI" id="CHEBI:59513"/>
        <dbReference type="EC" id="1.6.5.4"/>
    </reaction>
</comment>
<comment type="cofactor">
    <cofactor evidence="3">
        <name>FAD</name>
        <dbReference type="ChEBI" id="CHEBI:57692"/>
    </cofactor>
</comment>
<comment type="subcellular location">
    <subcellularLocation>
        <location evidence="7">Cytoplasm</location>
    </subcellularLocation>
</comment>
<comment type="induction">
    <text evidence="5">Down-regulated by atrazine.</text>
</comment>
<comment type="similarity">
    <text evidence="7">Belongs to the FAD-dependent oxidoreductase family.</text>
</comment>
<comment type="sequence caution" evidence="7">
    <conflict type="erroneous gene model prediction">
        <sequence resource="EMBL-CDS" id="CAB82928"/>
    </conflict>
</comment>
<evidence type="ECO:0000250" key="1">
    <source>
        <dbReference type="UniProtKB" id="Q652L6"/>
    </source>
</evidence>
<evidence type="ECO:0000250" key="2">
    <source>
        <dbReference type="UniProtKB" id="Q9LFA3"/>
    </source>
</evidence>
<evidence type="ECO:0000250" key="3">
    <source>
        <dbReference type="UniProtKB" id="Q9S926"/>
    </source>
</evidence>
<evidence type="ECO:0000269" key="4">
    <source>
    </source>
</evidence>
<evidence type="ECO:0000269" key="5">
    <source>
    </source>
</evidence>
<evidence type="ECO:0000303" key="6">
    <source>
    </source>
</evidence>
<evidence type="ECO:0000305" key="7"/>
<evidence type="ECO:0000312" key="8">
    <source>
        <dbReference type="Araport" id="AT5G03630"/>
    </source>
</evidence>
<evidence type="ECO:0000312" key="9">
    <source>
        <dbReference type="EMBL" id="CAB82928.1"/>
    </source>
</evidence>
<sequence>MAEEKSFKYVIVGGGVAAGYAAREFFNQGVKPGELAIISREQVPPYERPALSKGYIHLENKATLPNFYVAAGIGGERQFPQWYKEKGIELILGTEIVKADLAAKTLVSGTGQVFKYQTLLAATGSSVIRLSDFGVPGADAKNIFYLRELEDADYLAYAMETKEKGKAVVVGGGYIGLELGAALKANNLDVTMVYPEPWCMPRLFTAGIASFYEGYYANKGINIVKGTVASGFTTNSNGEVTEVKLKDGRTLEADIVIVGVGGRPIISLFKDQVEEEKGGLKTDGFFKTSLPDVYAIGDVATFPMKLYNEMRRVEHVDHARKSAEQAVKAIKAAEEGNSIPEYDYLPYFYSRAFDLSWQFYGDNVGESVLFGDNDPESPKPKFGSYWIKERKVVGAFLEGGSPEENNAIAKLARAQPSVESLEVLSKEGLSFATNI</sequence>
<name>MDAR2_ARATH</name>
<dbReference type="EC" id="1.6.5.4" evidence="7"/>
<dbReference type="EMBL" id="AL162506">
    <property type="protein sequence ID" value="CAB82928.1"/>
    <property type="status" value="ALT_SEQ"/>
    <property type="molecule type" value="Genomic_DNA"/>
</dbReference>
<dbReference type="EMBL" id="CP002688">
    <property type="protein sequence ID" value="AED90635.1"/>
    <property type="molecule type" value="Genomic_DNA"/>
</dbReference>
<dbReference type="EMBL" id="AF428317">
    <property type="protein sequence ID" value="AAL16247.1"/>
    <property type="molecule type" value="mRNA"/>
</dbReference>
<dbReference type="EMBL" id="AY057628">
    <property type="protein sequence ID" value="AAL15259.1"/>
    <property type="molecule type" value="mRNA"/>
</dbReference>
<dbReference type="EMBL" id="AY142000">
    <property type="protein sequence ID" value="AAM98264.1"/>
    <property type="molecule type" value="mRNA"/>
</dbReference>
<dbReference type="EMBL" id="AY087318">
    <property type="protein sequence ID" value="AAM64868.1"/>
    <property type="molecule type" value="mRNA"/>
</dbReference>
<dbReference type="EMBL" id="AK227165">
    <property type="protein sequence ID" value="BAE99207.1"/>
    <property type="molecule type" value="mRNA"/>
</dbReference>
<dbReference type="PIR" id="T48390">
    <property type="entry name" value="T48390"/>
</dbReference>
<dbReference type="RefSeq" id="NP_568125.1">
    <property type="nucleotide sequence ID" value="NM_120444.5"/>
</dbReference>
<dbReference type="SMR" id="Q93WJ8"/>
<dbReference type="BioGRID" id="17050">
    <property type="interactions" value="15"/>
</dbReference>
<dbReference type="FunCoup" id="Q93WJ8">
    <property type="interactions" value="1236"/>
</dbReference>
<dbReference type="IntAct" id="Q93WJ8">
    <property type="interactions" value="2"/>
</dbReference>
<dbReference type="STRING" id="3702.Q93WJ8"/>
<dbReference type="iPTMnet" id="Q93WJ8"/>
<dbReference type="PaxDb" id="3702-AT5G03630.1"/>
<dbReference type="ProteomicsDB" id="238768"/>
<dbReference type="EnsemblPlants" id="AT5G03630.1">
    <property type="protein sequence ID" value="AT5G03630.1"/>
    <property type="gene ID" value="AT5G03630"/>
</dbReference>
<dbReference type="GeneID" id="831774"/>
<dbReference type="Gramene" id="AT5G03630.1">
    <property type="protein sequence ID" value="AT5G03630.1"/>
    <property type="gene ID" value="AT5G03630"/>
</dbReference>
<dbReference type="KEGG" id="ath:AT5G03630"/>
<dbReference type="Araport" id="AT5G03630"/>
<dbReference type="TAIR" id="AT5G03630">
    <property type="gene designation" value="MDAR2"/>
</dbReference>
<dbReference type="eggNOG" id="KOG1336">
    <property type="taxonomic scope" value="Eukaryota"/>
</dbReference>
<dbReference type="HOGENOM" id="CLU_003291_4_1_1"/>
<dbReference type="InParanoid" id="Q93WJ8"/>
<dbReference type="OMA" id="RNAQDQG"/>
<dbReference type="PhylomeDB" id="Q93WJ8"/>
<dbReference type="BioCyc" id="ARA:AT5G03630-MONOMER"/>
<dbReference type="PRO" id="PR:Q93WJ8"/>
<dbReference type="Proteomes" id="UP000006548">
    <property type="component" value="Chromosome 5"/>
</dbReference>
<dbReference type="ExpressionAtlas" id="Q93WJ8">
    <property type="expression patterns" value="baseline and differential"/>
</dbReference>
<dbReference type="GO" id="GO:0009570">
    <property type="term" value="C:chloroplast stroma"/>
    <property type="evidence" value="ECO:0007005"/>
    <property type="project" value="TAIR"/>
</dbReference>
<dbReference type="GO" id="GO:0005829">
    <property type="term" value="C:cytosol"/>
    <property type="evidence" value="ECO:0000314"/>
    <property type="project" value="TAIR"/>
</dbReference>
<dbReference type="GO" id="GO:0005886">
    <property type="term" value="C:plasma membrane"/>
    <property type="evidence" value="ECO:0007005"/>
    <property type="project" value="TAIR"/>
</dbReference>
<dbReference type="GO" id="GO:0016656">
    <property type="term" value="F:monodehydroascorbate reductase (NADH) activity"/>
    <property type="evidence" value="ECO:0000250"/>
    <property type="project" value="TAIR"/>
</dbReference>
<dbReference type="GO" id="GO:0010043">
    <property type="term" value="P:response to zinc ion"/>
    <property type="evidence" value="ECO:0000270"/>
    <property type="project" value="TAIR"/>
</dbReference>
<dbReference type="FunFam" id="3.30.390.30:FF:000013">
    <property type="entry name" value="Monodehydroascorbate reductase 3"/>
    <property type="match status" value="1"/>
</dbReference>
<dbReference type="FunFam" id="3.50.50.60:FF:000155">
    <property type="entry name" value="Monodehydroascorbate reductase 3"/>
    <property type="match status" value="1"/>
</dbReference>
<dbReference type="Gene3D" id="3.30.390.30">
    <property type="match status" value="1"/>
</dbReference>
<dbReference type="Gene3D" id="3.50.50.60">
    <property type="entry name" value="FAD/NAD(P)-binding domain"/>
    <property type="match status" value="2"/>
</dbReference>
<dbReference type="InterPro" id="IPR050446">
    <property type="entry name" value="FAD-oxidoreductase/Apoptosis"/>
</dbReference>
<dbReference type="InterPro" id="IPR036188">
    <property type="entry name" value="FAD/NAD-bd_sf"/>
</dbReference>
<dbReference type="InterPro" id="IPR023753">
    <property type="entry name" value="FAD/NAD-binding_dom"/>
</dbReference>
<dbReference type="InterPro" id="IPR016156">
    <property type="entry name" value="FAD/NAD-linked_Rdtase_dimer_sf"/>
</dbReference>
<dbReference type="InterPro" id="IPR048618">
    <property type="entry name" value="MDHAR3-like_C"/>
</dbReference>
<dbReference type="PANTHER" id="PTHR43557">
    <property type="entry name" value="APOPTOSIS-INDUCING FACTOR 1"/>
    <property type="match status" value="1"/>
</dbReference>
<dbReference type="PANTHER" id="PTHR43557:SF13">
    <property type="entry name" value="MONODEHYDROASCORBATE REDUCTASE 2-RELATED"/>
    <property type="match status" value="1"/>
</dbReference>
<dbReference type="Pfam" id="PF21791">
    <property type="entry name" value="MDHAR3-like_C"/>
    <property type="match status" value="1"/>
</dbReference>
<dbReference type="Pfam" id="PF07992">
    <property type="entry name" value="Pyr_redox_2"/>
    <property type="match status" value="1"/>
</dbReference>
<dbReference type="PRINTS" id="PR00368">
    <property type="entry name" value="FADPNR"/>
</dbReference>
<dbReference type="PRINTS" id="PR00411">
    <property type="entry name" value="PNDRDTASEI"/>
</dbReference>
<dbReference type="SUPFAM" id="SSF51905">
    <property type="entry name" value="FAD/NAD(P)-binding domain"/>
    <property type="match status" value="1"/>
</dbReference>
<dbReference type="SUPFAM" id="SSF55424">
    <property type="entry name" value="FAD/NAD-linked reductases, dimerisation (C-terminal) domain"/>
    <property type="match status" value="1"/>
</dbReference>
<reference key="1">
    <citation type="journal article" date="2000" name="Nature">
        <title>Sequence and analysis of chromosome 5 of the plant Arabidopsis thaliana.</title>
        <authorList>
            <person name="Tabata S."/>
            <person name="Kaneko T."/>
            <person name="Nakamura Y."/>
            <person name="Kotani H."/>
            <person name="Kato T."/>
            <person name="Asamizu E."/>
            <person name="Miyajima N."/>
            <person name="Sasamoto S."/>
            <person name="Kimura T."/>
            <person name="Hosouchi T."/>
            <person name="Kawashima K."/>
            <person name="Kohara M."/>
            <person name="Matsumoto M."/>
            <person name="Matsuno A."/>
            <person name="Muraki A."/>
            <person name="Nakayama S."/>
            <person name="Nakazaki N."/>
            <person name="Naruo K."/>
            <person name="Okumura S."/>
            <person name="Shinpo S."/>
            <person name="Takeuchi C."/>
            <person name="Wada T."/>
            <person name="Watanabe A."/>
            <person name="Yamada M."/>
            <person name="Yasuda M."/>
            <person name="Sato S."/>
            <person name="de la Bastide M."/>
            <person name="Huang E."/>
            <person name="Spiegel L."/>
            <person name="Gnoj L."/>
            <person name="O'Shaughnessy A."/>
            <person name="Preston R."/>
            <person name="Habermann K."/>
            <person name="Murray J."/>
            <person name="Johnson D."/>
            <person name="Rohlfing T."/>
            <person name="Nelson J."/>
            <person name="Stoneking T."/>
            <person name="Pepin K."/>
            <person name="Spieth J."/>
            <person name="Sekhon M."/>
            <person name="Armstrong J."/>
            <person name="Becker M."/>
            <person name="Belter E."/>
            <person name="Cordum H."/>
            <person name="Cordes M."/>
            <person name="Courtney L."/>
            <person name="Courtney W."/>
            <person name="Dante M."/>
            <person name="Du H."/>
            <person name="Edwards J."/>
            <person name="Fryman J."/>
            <person name="Haakensen B."/>
            <person name="Lamar E."/>
            <person name="Latreille P."/>
            <person name="Leonard S."/>
            <person name="Meyer R."/>
            <person name="Mulvaney E."/>
            <person name="Ozersky P."/>
            <person name="Riley A."/>
            <person name="Strowmatt C."/>
            <person name="Wagner-McPherson C."/>
            <person name="Wollam A."/>
            <person name="Yoakum M."/>
            <person name="Bell M."/>
            <person name="Dedhia N."/>
            <person name="Parnell L."/>
            <person name="Shah R."/>
            <person name="Rodriguez M."/>
            <person name="Hoon See L."/>
            <person name="Vil D."/>
            <person name="Baker J."/>
            <person name="Kirchoff K."/>
            <person name="Toth K."/>
            <person name="King L."/>
            <person name="Bahret A."/>
            <person name="Miller B."/>
            <person name="Marra M.A."/>
            <person name="Martienssen R."/>
            <person name="McCombie W.R."/>
            <person name="Wilson R.K."/>
            <person name="Murphy G."/>
            <person name="Bancroft I."/>
            <person name="Volckaert G."/>
            <person name="Wambutt R."/>
            <person name="Duesterhoeft A."/>
            <person name="Stiekema W."/>
            <person name="Pohl T."/>
            <person name="Entian K.-D."/>
            <person name="Terryn N."/>
            <person name="Hartley N."/>
            <person name="Bent E."/>
            <person name="Johnson S."/>
            <person name="Langham S.-A."/>
            <person name="McCullagh B."/>
            <person name="Robben J."/>
            <person name="Grymonprez B."/>
            <person name="Zimmermann W."/>
            <person name="Ramsperger U."/>
            <person name="Wedler H."/>
            <person name="Balke K."/>
            <person name="Wedler E."/>
            <person name="Peters S."/>
            <person name="van Staveren M."/>
            <person name="Dirkse W."/>
            <person name="Mooijman P."/>
            <person name="Klein Lankhorst R."/>
            <person name="Weitzenegger T."/>
            <person name="Bothe G."/>
            <person name="Rose M."/>
            <person name="Hauf J."/>
            <person name="Berneiser S."/>
            <person name="Hempel S."/>
            <person name="Feldpausch M."/>
            <person name="Lamberth S."/>
            <person name="Villarroel R."/>
            <person name="Gielen J."/>
            <person name="Ardiles W."/>
            <person name="Bents O."/>
            <person name="Lemcke K."/>
            <person name="Kolesov G."/>
            <person name="Mayer K.F.X."/>
            <person name="Rudd S."/>
            <person name="Schoof H."/>
            <person name="Schueller C."/>
            <person name="Zaccaria P."/>
            <person name="Mewes H.-W."/>
            <person name="Bevan M."/>
            <person name="Fransz P.F."/>
        </authorList>
    </citation>
    <scope>NUCLEOTIDE SEQUENCE [LARGE SCALE GENOMIC DNA]</scope>
    <source>
        <strain>cv. Columbia</strain>
    </source>
</reference>
<reference key="2">
    <citation type="journal article" date="2017" name="Plant J.">
        <title>Araport11: a complete reannotation of the Arabidopsis thaliana reference genome.</title>
        <authorList>
            <person name="Cheng C.Y."/>
            <person name="Krishnakumar V."/>
            <person name="Chan A.P."/>
            <person name="Thibaud-Nissen F."/>
            <person name="Schobel S."/>
            <person name="Town C.D."/>
        </authorList>
    </citation>
    <scope>GENOME REANNOTATION</scope>
    <source>
        <strain>cv. Columbia</strain>
    </source>
</reference>
<reference key="3">
    <citation type="journal article" date="2003" name="Science">
        <title>Empirical analysis of transcriptional activity in the Arabidopsis genome.</title>
        <authorList>
            <person name="Yamada K."/>
            <person name="Lim J."/>
            <person name="Dale J.M."/>
            <person name="Chen H."/>
            <person name="Shinn P."/>
            <person name="Palm C.J."/>
            <person name="Southwick A.M."/>
            <person name="Wu H.C."/>
            <person name="Kim C.J."/>
            <person name="Nguyen M."/>
            <person name="Pham P.K."/>
            <person name="Cheuk R.F."/>
            <person name="Karlin-Newmann G."/>
            <person name="Liu S.X."/>
            <person name="Lam B."/>
            <person name="Sakano H."/>
            <person name="Wu T."/>
            <person name="Yu G."/>
            <person name="Miranda M."/>
            <person name="Quach H.L."/>
            <person name="Tripp M."/>
            <person name="Chang C.H."/>
            <person name="Lee J.M."/>
            <person name="Toriumi M.J."/>
            <person name="Chan M.M."/>
            <person name="Tang C.C."/>
            <person name="Onodera C.S."/>
            <person name="Deng J.M."/>
            <person name="Akiyama K."/>
            <person name="Ansari Y."/>
            <person name="Arakawa T."/>
            <person name="Banh J."/>
            <person name="Banno F."/>
            <person name="Bowser L."/>
            <person name="Brooks S.Y."/>
            <person name="Carninci P."/>
            <person name="Chao Q."/>
            <person name="Choy N."/>
            <person name="Enju A."/>
            <person name="Goldsmith A.D."/>
            <person name="Gurjal M."/>
            <person name="Hansen N.F."/>
            <person name="Hayashizaki Y."/>
            <person name="Johnson-Hopson C."/>
            <person name="Hsuan V.W."/>
            <person name="Iida K."/>
            <person name="Karnes M."/>
            <person name="Khan S."/>
            <person name="Koesema E."/>
            <person name="Ishida J."/>
            <person name="Jiang P.X."/>
            <person name="Jones T."/>
            <person name="Kawai J."/>
            <person name="Kamiya A."/>
            <person name="Meyers C."/>
            <person name="Nakajima M."/>
            <person name="Narusaka M."/>
            <person name="Seki M."/>
            <person name="Sakurai T."/>
            <person name="Satou M."/>
            <person name="Tamse R."/>
            <person name="Vaysberg M."/>
            <person name="Wallender E.K."/>
            <person name="Wong C."/>
            <person name="Yamamura Y."/>
            <person name="Yuan S."/>
            <person name="Shinozaki K."/>
            <person name="Davis R.W."/>
            <person name="Theologis A."/>
            <person name="Ecker J.R."/>
        </authorList>
    </citation>
    <scope>NUCLEOTIDE SEQUENCE [LARGE SCALE MRNA]</scope>
    <source>
        <strain>cv. Columbia</strain>
    </source>
</reference>
<reference key="4">
    <citation type="submission" date="2002-03" db="EMBL/GenBank/DDBJ databases">
        <title>Full-length cDNA from Arabidopsis thaliana.</title>
        <authorList>
            <person name="Brover V.V."/>
            <person name="Troukhan M.E."/>
            <person name="Alexandrov N.A."/>
            <person name="Lu Y.-P."/>
            <person name="Flavell R.B."/>
            <person name="Feldmann K.A."/>
        </authorList>
    </citation>
    <scope>NUCLEOTIDE SEQUENCE [LARGE SCALE MRNA]</scope>
</reference>
<reference key="5">
    <citation type="submission" date="2006-07" db="EMBL/GenBank/DDBJ databases">
        <title>Large-scale analysis of RIKEN Arabidopsis full-length (RAFL) cDNAs.</title>
        <authorList>
            <person name="Totoki Y."/>
            <person name="Seki M."/>
            <person name="Ishida J."/>
            <person name="Nakajima M."/>
            <person name="Enju A."/>
            <person name="Kamiya A."/>
            <person name="Narusaka M."/>
            <person name="Shin-i T."/>
            <person name="Nakagawa M."/>
            <person name="Sakamoto N."/>
            <person name="Oishi K."/>
            <person name="Kohara Y."/>
            <person name="Kobayashi M."/>
            <person name="Toyoda A."/>
            <person name="Sakaki Y."/>
            <person name="Sakurai T."/>
            <person name="Iida K."/>
            <person name="Akiyama K."/>
            <person name="Satou M."/>
            <person name="Toyoda T."/>
            <person name="Konagaya A."/>
            <person name="Carninci P."/>
            <person name="Kawai J."/>
            <person name="Hayashizaki Y."/>
            <person name="Shinozaki K."/>
        </authorList>
    </citation>
    <scope>NUCLEOTIDE SEQUENCE [LARGE SCALE MRNA]</scope>
    <source>
        <strain>cv. Columbia</strain>
    </source>
</reference>
<reference key="6">
    <citation type="journal article" date="2005" name="Plant J.">
        <title>Arabidopsis peroxisomes possess functionally redundant membrane and matrix isoforms of monodehydroascorbate reductase.</title>
        <authorList>
            <person name="Lisenbee C.S."/>
            <person name="Lingard M.J."/>
            <person name="Trelease R.N."/>
        </authorList>
    </citation>
    <scope>FUNCTION</scope>
    <scope>GENE FAMILY</scope>
    <scope>NOMENCLATURE</scope>
</reference>
<reference key="7">
    <citation type="journal article" date="2007" name="Mol. Cell. Proteomics">
        <title>Multidimensional protein identification technology (MudPIT) analysis of ubiquitinated proteins in plants.</title>
        <authorList>
            <person name="Maor R."/>
            <person name="Jones A."/>
            <person name="Nuehse T.S."/>
            <person name="Studholme D.J."/>
            <person name="Peck S.C."/>
            <person name="Shirasu K."/>
        </authorList>
    </citation>
    <scope>IDENTIFICATION BY MASS SPECTROMETRY [LARGE SCALE ANALYSIS]</scope>
    <source>
        <strain>cv. Landsberg erecta</strain>
    </source>
</reference>
<reference key="8">
    <citation type="journal article" date="2009" name="BMC Plant Biol.">
        <title>Differential patterns of reactive oxygen species and antioxidative mechanisms during atrazine injury and sucrose-induced tolerance in Arabidopsis thaliana plantlets.</title>
        <authorList>
            <person name="Ramel F."/>
            <person name="Sulmon C."/>
            <person name="Bogard M."/>
            <person name="Couee I."/>
            <person name="Gouesbet G."/>
        </authorList>
    </citation>
    <scope>INDUCTION BY ATRAZINE</scope>
</reference>